<proteinExistence type="inferred from homology"/>
<gene>
    <name evidence="1" type="primary">rpsI</name>
    <name type="ordered locus">swp_0702</name>
</gene>
<dbReference type="EMBL" id="CP000472">
    <property type="protein sequence ID" value="ACJ27519.1"/>
    <property type="molecule type" value="Genomic_DNA"/>
</dbReference>
<dbReference type="RefSeq" id="WP_020910900.1">
    <property type="nucleotide sequence ID" value="NC_011566.1"/>
</dbReference>
<dbReference type="SMR" id="B8CIP3"/>
<dbReference type="STRING" id="225849.swp_0702"/>
<dbReference type="KEGG" id="swp:swp_0702"/>
<dbReference type="eggNOG" id="COG0103">
    <property type="taxonomic scope" value="Bacteria"/>
</dbReference>
<dbReference type="HOGENOM" id="CLU_046483_2_1_6"/>
<dbReference type="OrthoDB" id="9803965at2"/>
<dbReference type="Proteomes" id="UP000000753">
    <property type="component" value="Chromosome"/>
</dbReference>
<dbReference type="GO" id="GO:0022627">
    <property type="term" value="C:cytosolic small ribosomal subunit"/>
    <property type="evidence" value="ECO:0007669"/>
    <property type="project" value="TreeGrafter"/>
</dbReference>
<dbReference type="GO" id="GO:0003723">
    <property type="term" value="F:RNA binding"/>
    <property type="evidence" value="ECO:0007669"/>
    <property type="project" value="TreeGrafter"/>
</dbReference>
<dbReference type="GO" id="GO:0003735">
    <property type="term" value="F:structural constituent of ribosome"/>
    <property type="evidence" value="ECO:0007669"/>
    <property type="project" value="InterPro"/>
</dbReference>
<dbReference type="GO" id="GO:0006412">
    <property type="term" value="P:translation"/>
    <property type="evidence" value="ECO:0007669"/>
    <property type="project" value="UniProtKB-UniRule"/>
</dbReference>
<dbReference type="FunFam" id="3.30.230.10:FF:000001">
    <property type="entry name" value="30S ribosomal protein S9"/>
    <property type="match status" value="1"/>
</dbReference>
<dbReference type="Gene3D" id="3.30.230.10">
    <property type="match status" value="1"/>
</dbReference>
<dbReference type="HAMAP" id="MF_00532_B">
    <property type="entry name" value="Ribosomal_uS9_B"/>
    <property type="match status" value="1"/>
</dbReference>
<dbReference type="InterPro" id="IPR020568">
    <property type="entry name" value="Ribosomal_Su5_D2-typ_SF"/>
</dbReference>
<dbReference type="InterPro" id="IPR000754">
    <property type="entry name" value="Ribosomal_uS9"/>
</dbReference>
<dbReference type="InterPro" id="IPR023035">
    <property type="entry name" value="Ribosomal_uS9_bac/plastid"/>
</dbReference>
<dbReference type="InterPro" id="IPR020574">
    <property type="entry name" value="Ribosomal_uS9_CS"/>
</dbReference>
<dbReference type="InterPro" id="IPR014721">
    <property type="entry name" value="Ribsml_uS5_D2-typ_fold_subgr"/>
</dbReference>
<dbReference type="NCBIfam" id="NF001099">
    <property type="entry name" value="PRK00132.1"/>
    <property type="match status" value="1"/>
</dbReference>
<dbReference type="PANTHER" id="PTHR21569">
    <property type="entry name" value="RIBOSOMAL PROTEIN S9"/>
    <property type="match status" value="1"/>
</dbReference>
<dbReference type="PANTHER" id="PTHR21569:SF1">
    <property type="entry name" value="SMALL RIBOSOMAL SUBUNIT PROTEIN US9M"/>
    <property type="match status" value="1"/>
</dbReference>
<dbReference type="Pfam" id="PF00380">
    <property type="entry name" value="Ribosomal_S9"/>
    <property type="match status" value="1"/>
</dbReference>
<dbReference type="SUPFAM" id="SSF54211">
    <property type="entry name" value="Ribosomal protein S5 domain 2-like"/>
    <property type="match status" value="1"/>
</dbReference>
<dbReference type="PROSITE" id="PS00360">
    <property type="entry name" value="RIBOSOMAL_S9"/>
    <property type="match status" value="1"/>
</dbReference>
<accession>B8CIP3</accession>
<reference key="1">
    <citation type="journal article" date="2008" name="PLoS ONE">
        <title>Environmental adaptation: genomic analysis of the piezotolerant and psychrotolerant deep-sea iron reducing bacterium Shewanella piezotolerans WP3.</title>
        <authorList>
            <person name="Wang F."/>
            <person name="Wang J."/>
            <person name="Jian H."/>
            <person name="Zhang B."/>
            <person name="Li S."/>
            <person name="Wang F."/>
            <person name="Zeng X."/>
            <person name="Gao L."/>
            <person name="Bartlett D.H."/>
            <person name="Yu J."/>
            <person name="Hu S."/>
            <person name="Xiao X."/>
        </authorList>
    </citation>
    <scope>NUCLEOTIDE SEQUENCE [LARGE SCALE GENOMIC DNA]</scope>
    <source>
        <strain>WP3 / JCM 13877</strain>
    </source>
</reference>
<feature type="chain" id="PRO_1000128174" description="Small ribosomal subunit protein uS9">
    <location>
        <begin position="1"/>
        <end position="130"/>
    </location>
</feature>
<protein>
    <recommendedName>
        <fullName evidence="1">Small ribosomal subunit protein uS9</fullName>
    </recommendedName>
    <alternativeName>
        <fullName evidence="2">30S ribosomal protein S9</fullName>
    </alternativeName>
</protein>
<organism>
    <name type="scientific">Shewanella piezotolerans (strain WP3 / JCM 13877)</name>
    <dbReference type="NCBI Taxonomy" id="225849"/>
    <lineage>
        <taxon>Bacteria</taxon>
        <taxon>Pseudomonadati</taxon>
        <taxon>Pseudomonadota</taxon>
        <taxon>Gammaproteobacteria</taxon>
        <taxon>Alteromonadales</taxon>
        <taxon>Shewanellaceae</taxon>
        <taxon>Shewanella</taxon>
    </lineage>
</organism>
<sequence length="130" mass="14521">MAATQYYGTGRRKTSTARVFAKVGTGNITVNKLPLDEYFGRETSRMVVRQPLELVEMTEKLDINVTVKGGGNTGQAGAIRHGITRALMELDESLRPSLRAAGFVTRDARKVERKKVGLRKARRKPQFSKR</sequence>
<keyword id="KW-0687">Ribonucleoprotein</keyword>
<keyword id="KW-0689">Ribosomal protein</keyword>
<comment type="similarity">
    <text evidence="1">Belongs to the universal ribosomal protein uS9 family.</text>
</comment>
<evidence type="ECO:0000255" key="1">
    <source>
        <dbReference type="HAMAP-Rule" id="MF_00532"/>
    </source>
</evidence>
<evidence type="ECO:0000305" key="2"/>
<name>RS9_SHEPW</name>